<proteinExistence type="inferred from homology"/>
<dbReference type="EC" id="2.1.1.-" evidence="1"/>
<dbReference type="EMBL" id="CU329670">
    <property type="protein sequence ID" value="CAB90780.2"/>
    <property type="molecule type" value="Genomic_DNA"/>
</dbReference>
<dbReference type="RefSeq" id="NP_594072.2">
    <property type="nucleotide sequence ID" value="NM_001019496.2"/>
</dbReference>
<dbReference type="SMR" id="Q9P6L2"/>
<dbReference type="BioGRID" id="279768">
    <property type="interactions" value="13"/>
</dbReference>
<dbReference type="FunCoup" id="Q9P6L2">
    <property type="interactions" value="423"/>
</dbReference>
<dbReference type="STRING" id="284812.Q9P6L2"/>
<dbReference type="iPTMnet" id="Q9P6L2"/>
<dbReference type="PaxDb" id="4896-SPAC688.14.1"/>
<dbReference type="EnsemblFungi" id="SPAC688.14.1">
    <property type="protein sequence ID" value="SPAC688.14.1:pep"/>
    <property type="gene ID" value="SPAC688.14"/>
</dbReference>
<dbReference type="GeneID" id="2543346"/>
<dbReference type="KEGG" id="spo:2543346"/>
<dbReference type="PomBase" id="SPAC688.14">
    <property type="gene designation" value="set13"/>
</dbReference>
<dbReference type="VEuPathDB" id="FungiDB:SPAC688.14"/>
<dbReference type="eggNOG" id="KOG1338">
    <property type="taxonomic scope" value="Eukaryota"/>
</dbReference>
<dbReference type="HOGENOM" id="CLU_621353_0_0_1"/>
<dbReference type="InParanoid" id="Q9P6L2"/>
<dbReference type="OMA" id="MFNGDDE"/>
<dbReference type="PRO" id="PR:Q9P6L2"/>
<dbReference type="Proteomes" id="UP000002485">
    <property type="component" value="Chromosome I"/>
</dbReference>
<dbReference type="GO" id="GO:0005634">
    <property type="term" value="C:nucleus"/>
    <property type="evidence" value="ECO:0000314"/>
    <property type="project" value="PomBase"/>
</dbReference>
<dbReference type="GO" id="GO:0016279">
    <property type="term" value="F:protein-lysine N-methyltransferase activity"/>
    <property type="evidence" value="ECO:0000314"/>
    <property type="project" value="PomBase"/>
</dbReference>
<dbReference type="GO" id="GO:0032259">
    <property type="term" value="P:methylation"/>
    <property type="evidence" value="ECO:0007669"/>
    <property type="project" value="UniProtKB-KW"/>
</dbReference>
<dbReference type="GO" id="GO:1990625">
    <property type="term" value="P:negative regulation of cytoplasmic translational initiation in response to stress"/>
    <property type="evidence" value="ECO:0000315"/>
    <property type="project" value="PomBase"/>
</dbReference>
<dbReference type="CDD" id="cd19178">
    <property type="entry name" value="SET_SETD6"/>
    <property type="match status" value="1"/>
</dbReference>
<dbReference type="Gene3D" id="3.90.1410.10">
    <property type="entry name" value="set domain protein methyltransferase, domain 1"/>
    <property type="match status" value="1"/>
</dbReference>
<dbReference type="InterPro" id="IPR011383">
    <property type="entry name" value="N-lys_methylase_SETD6"/>
</dbReference>
<dbReference type="InterPro" id="IPR001214">
    <property type="entry name" value="SET_dom"/>
</dbReference>
<dbReference type="InterPro" id="IPR046341">
    <property type="entry name" value="SET_dom_sf"/>
</dbReference>
<dbReference type="InterPro" id="IPR050600">
    <property type="entry name" value="SETD3_SETD6_MTase"/>
</dbReference>
<dbReference type="InterPro" id="IPR044430">
    <property type="entry name" value="SETD6_SET"/>
</dbReference>
<dbReference type="PANTHER" id="PTHR13271:SF142">
    <property type="entry name" value="RIBOSOMAL LYSINE N-METHYLTRANSFERASE 4"/>
    <property type="match status" value="1"/>
</dbReference>
<dbReference type="PANTHER" id="PTHR13271">
    <property type="entry name" value="UNCHARACTERIZED PUTATIVE METHYLTRANSFERASE"/>
    <property type="match status" value="1"/>
</dbReference>
<dbReference type="Pfam" id="PF00856">
    <property type="entry name" value="SET"/>
    <property type="match status" value="1"/>
</dbReference>
<dbReference type="PIRSF" id="PIRSF011771">
    <property type="entry name" value="RMS1_SET"/>
    <property type="match status" value="1"/>
</dbReference>
<dbReference type="SUPFAM" id="SSF82199">
    <property type="entry name" value="SET domain"/>
    <property type="match status" value="1"/>
</dbReference>
<dbReference type="PROSITE" id="PS50280">
    <property type="entry name" value="SET"/>
    <property type="match status" value="1"/>
</dbReference>
<gene>
    <name evidence="6" type="primary">set13</name>
    <name evidence="8" type="ORF">SPAC688.14</name>
</gene>
<name>RKM4_SCHPO</name>
<keyword id="KW-0489">Methyltransferase</keyword>
<keyword id="KW-0539">Nucleus</keyword>
<keyword id="KW-1185">Reference proteome</keyword>
<keyword id="KW-0949">S-adenosyl-L-methionine</keyword>
<keyword id="KW-0808">Transferase</keyword>
<organism>
    <name type="scientific">Schizosaccharomyces pombe (strain 972 / ATCC 24843)</name>
    <name type="common">Fission yeast</name>
    <dbReference type="NCBI Taxonomy" id="284812"/>
    <lineage>
        <taxon>Eukaryota</taxon>
        <taxon>Fungi</taxon>
        <taxon>Dikarya</taxon>
        <taxon>Ascomycota</taxon>
        <taxon>Taphrinomycotina</taxon>
        <taxon>Schizosaccharomycetes</taxon>
        <taxon>Schizosaccharomycetales</taxon>
        <taxon>Schizosaccharomycetaceae</taxon>
        <taxon>Schizosaccharomyces</taxon>
    </lineage>
</organism>
<accession>Q9P6L2</accession>
<protein>
    <recommendedName>
        <fullName evidence="1">Ribosomal lysine N-methyltransferase 4</fullName>
        <ecNumber evidence="1">2.1.1.-</ecNumber>
    </recommendedName>
    <alternativeName>
        <fullName evidence="6">SET domain-containing protein 13</fullName>
    </alternativeName>
</protein>
<feature type="chain" id="PRO_0000303948" description="Ribosomal lysine N-methyltransferase 4">
    <location>
        <begin position="1"/>
        <end position="468"/>
    </location>
</feature>
<feature type="domain" description="SET" evidence="2">
    <location>
        <begin position="22"/>
        <end position="302"/>
    </location>
</feature>
<feature type="region of interest" description="Disordered" evidence="3">
    <location>
        <begin position="188"/>
        <end position="225"/>
    </location>
</feature>
<feature type="binding site" evidence="2">
    <location>
        <position position="301"/>
    </location>
    <ligand>
        <name>S-adenosyl-L-methionine</name>
        <dbReference type="ChEBI" id="CHEBI:59789"/>
    </ligand>
</feature>
<evidence type="ECO:0000250" key="1">
    <source>
        <dbReference type="UniProtKB" id="Q12504"/>
    </source>
</evidence>
<evidence type="ECO:0000255" key="2">
    <source>
        <dbReference type="PROSITE-ProRule" id="PRU00190"/>
    </source>
</evidence>
<evidence type="ECO:0000256" key="3">
    <source>
        <dbReference type="SAM" id="MobiDB-lite"/>
    </source>
</evidence>
<evidence type="ECO:0000269" key="4">
    <source>
    </source>
</evidence>
<evidence type="ECO:0000269" key="5">
    <source>
    </source>
</evidence>
<evidence type="ECO:0000303" key="6">
    <source>
    </source>
</evidence>
<evidence type="ECO:0000305" key="7"/>
<evidence type="ECO:0000312" key="8">
    <source>
        <dbReference type="PomBase" id="SPAC688.14"/>
    </source>
</evidence>
<comment type="function">
    <text evidence="5">S-adenosyl-L-methionine-dependent protein-lysine N-methyltransferase that monomethylates 60S ribosomal protein L42 (rpl42) at 'Lys-55'.</text>
</comment>
<comment type="subcellular location">
    <subcellularLocation>
        <location evidence="4 5">Nucleus</location>
    </subcellularLocation>
</comment>
<comment type="similarity">
    <text evidence="2 7">Belongs to the class V-like SAM-binding methyltransferase superfamily. Histone-lysine methyltransferase family. SETD6 subfamily.</text>
</comment>
<sequence>MLKQAESMLKWAIEKDNYTTSEKIGLNDYRHVHESLGIGFIALEDIKEDEKLVSFKKDSVLCLTNSDLAQLPEVQSLPSWAALLLVMATENASPNSFWRPYLSIFPTKERITSPFYWDENKKDALLRGTVLESNEDCNEITQLWIDRIEPIIKLYPNRFSQVSYEDFLRMSAVMLAYSFDIEKTKSPISNENEKSAAETSIKEDKNGDAAKKNEGSANQDDEKLHSQSLVGNNCEVNSEDEFSDLESEVDPDELEKAMCPISDMFNGDDELCNIRLYDINGTLTMIATRDIKKGEQLWNTYGELDNSELFRKYGFTKKKGTPHDFVLIKKEHWLPEYIEKLGFEEVEARLELLCREELLYNLEGDFTFSKADLTFKEICLAFVLMEKEKELISVPSKSDIKPKHYRKLLKIIEKRINMYPKISDPKNFDEENAKTLIEGEIDILQNLSAKVKEALTKNRPKKKQKVDH</sequence>
<reference key="1">
    <citation type="journal article" date="2002" name="Nature">
        <title>The genome sequence of Schizosaccharomyces pombe.</title>
        <authorList>
            <person name="Wood V."/>
            <person name="Gwilliam R."/>
            <person name="Rajandream M.A."/>
            <person name="Lyne M.H."/>
            <person name="Lyne R."/>
            <person name="Stewart A."/>
            <person name="Sgouros J.G."/>
            <person name="Peat N."/>
            <person name="Hayles J."/>
            <person name="Baker S.G."/>
            <person name="Basham D."/>
            <person name="Bowman S."/>
            <person name="Brooks K."/>
            <person name="Brown D."/>
            <person name="Brown S."/>
            <person name="Chillingworth T."/>
            <person name="Churcher C.M."/>
            <person name="Collins M."/>
            <person name="Connor R."/>
            <person name="Cronin A."/>
            <person name="Davis P."/>
            <person name="Feltwell T."/>
            <person name="Fraser A."/>
            <person name="Gentles S."/>
            <person name="Goble A."/>
            <person name="Hamlin N."/>
            <person name="Harris D.E."/>
            <person name="Hidalgo J."/>
            <person name="Hodgson G."/>
            <person name="Holroyd S."/>
            <person name="Hornsby T."/>
            <person name="Howarth S."/>
            <person name="Huckle E.J."/>
            <person name="Hunt S."/>
            <person name="Jagels K."/>
            <person name="James K.D."/>
            <person name="Jones L."/>
            <person name="Jones M."/>
            <person name="Leather S."/>
            <person name="McDonald S."/>
            <person name="McLean J."/>
            <person name="Mooney P."/>
            <person name="Moule S."/>
            <person name="Mungall K.L."/>
            <person name="Murphy L.D."/>
            <person name="Niblett D."/>
            <person name="Odell C."/>
            <person name="Oliver K."/>
            <person name="O'Neil S."/>
            <person name="Pearson D."/>
            <person name="Quail M.A."/>
            <person name="Rabbinowitsch E."/>
            <person name="Rutherford K.M."/>
            <person name="Rutter S."/>
            <person name="Saunders D."/>
            <person name="Seeger K."/>
            <person name="Sharp S."/>
            <person name="Skelton J."/>
            <person name="Simmonds M.N."/>
            <person name="Squares R."/>
            <person name="Squares S."/>
            <person name="Stevens K."/>
            <person name="Taylor K."/>
            <person name="Taylor R.G."/>
            <person name="Tivey A."/>
            <person name="Walsh S.V."/>
            <person name="Warren T."/>
            <person name="Whitehead S."/>
            <person name="Woodward J.R."/>
            <person name="Volckaert G."/>
            <person name="Aert R."/>
            <person name="Robben J."/>
            <person name="Grymonprez B."/>
            <person name="Weltjens I."/>
            <person name="Vanstreels E."/>
            <person name="Rieger M."/>
            <person name="Schaefer M."/>
            <person name="Mueller-Auer S."/>
            <person name="Gabel C."/>
            <person name="Fuchs M."/>
            <person name="Duesterhoeft A."/>
            <person name="Fritzc C."/>
            <person name="Holzer E."/>
            <person name="Moestl D."/>
            <person name="Hilbert H."/>
            <person name="Borzym K."/>
            <person name="Langer I."/>
            <person name="Beck A."/>
            <person name="Lehrach H."/>
            <person name="Reinhardt R."/>
            <person name="Pohl T.M."/>
            <person name="Eger P."/>
            <person name="Zimmermann W."/>
            <person name="Wedler H."/>
            <person name="Wambutt R."/>
            <person name="Purnelle B."/>
            <person name="Goffeau A."/>
            <person name="Cadieu E."/>
            <person name="Dreano S."/>
            <person name="Gloux S."/>
            <person name="Lelaure V."/>
            <person name="Mottier S."/>
            <person name="Galibert F."/>
            <person name="Aves S.J."/>
            <person name="Xiang Z."/>
            <person name="Hunt C."/>
            <person name="Moore K."/>
            <person name="Hurst S.M."/>
            <person name="Lucas M."/>
            <person name="Rochet M."/>
            <person name="Gaillardin C."/>
            <person name="Tallada V.A."/>
            <person name="Garzon A."/>
            <person name="Thode G."/>
            <person name="Daga R.R."/>
            <person name="Cruzado L."/>
            <person name="Jimenez J."/>
            <person name="Sanchez M."/>
            <person name="del Rey F."/>
            <person name="Benito J."/>
            <person name="Dominguez A."/>
            <person name="Revuelta J.L."/>
            <person name="Moreno S."/>
            <person name="Armstrong J."/>
            <person name="Forsburg S.L."/>
            <person name="Cerutti L."/>
            <person name="Lowe T."/>
            <person name="McCombie W.R."/>
            <person name="Paulsen I."/>
            <person name="Potashkin J."/>
            <person name="Shpakovski G.V."/>
            <person name="Ussery D."/>
            <person name="Barrell B.G."/>
            <person name="Nurse P."/>
        </authorList>
    </citation>
    <scope>NUCLEOTIDE SEQUENCE [LARGE SCALE GENOMIC DNA]</scope>
    <source>
        <strain>972 / ATCC 24843</strain>
    </source>
</reference>
<reference key="2">
    <citation type="journal article" date="2011" name="Science">
        <title>Comparative functional genomics of the fission yeasts.</title>
        <authorList>
            <person name="Rhind N."/>
            <person name="Chen Z."/>
            <person name="Yassour M."/>
            <person name="Thompson D.A."/>
            <person name="Haas B.J."/>
            <person name="Habib N."/>
            <person name="Wapinski I."/>
            <person name="Roy S."/>
            <person name="Lin M.F."/>
            <person name="Heiman D.I."/>
            <person name="Young S.K."/>
            <person name="Furuya K."/>
            <person name="Guo Y."/>
            <person name="Pidoux A."/>
            <person name="Chen H.M."/>
            <person name="Robbertse B."/>
            <person name="Goldberg J.M."/>
            <person name="Aoki K."/>
            <person name="Bayne E.H."/>
            <person name="Berlin A.M."/>
            <person name="Desjardins C.A."/>
            <person name="Dobbs E."/>
            <person name="Dukaj L."/>
            <person name="Fan L."/>
            <person name="FitzGerald M.G."/>
            <person name="French C."/>
            <person name="Gujja S."/>
            <person name="Hansen K."/>
            <person name="Keifenheim D."/>
            <person name="Levin J.Z."/>
            <person name="Mosher R.A."/>
            <person name="Mueller C.A."/>
            <person name="Pfiffner J."/>
            <person name="Priest M."/>
            <person name="Russ C."/>
            <person name="Smialowska A."/>
            <person name="Swoboda P."/>
            <person name="Sykes S.M."/>
            <person name="Vaughn M."/>
            <person name="Vengrova S."/>
            <person name="Yoder R."/>
            <person name="Zeng Q."/>
            <person name="Allshire R."/>
            <person name="Baulcombe D."/>
            <person name="Birren B.W."/>
            <person name="Brown W."/>
            <person name="Ekwall K."/>
            <person name="Kellis M."/>
            <person name="Leatherwood J."/>
            <person name="Levin H."/>
            <person name="Margalit H."/>
            <person name="Martienssen R."/>
            <person name="Nieduszynski C.A."/>
            <person name="Spatafora J.W."/>
            <person name="Friedman N."/>
            <person name="Dalgaard J.Z."/>
            <person name="Baumann P."/>
            <person name="Niki H."/>
            <person name="Regev A."/>
            <person name="Nusbaum C."/>
        </authorList>
    </citation>
    <scope>REVISION OF GENE MODEL</scope>
</reference>
<reference key="3">
    <citation type="journal article" date="2006" name="Nat. Biotechnol.">
        <title>ORFeome cloning and global analysis of protein localization in the fission yeast Schizosaccharomyces pombe.</title>
        <authorList>
            <person name="Matsuyama A."/>
            <person name="Arai R."/>
            <person name="Yashiroda Y."/>
            <person name="Shirai A."/>
            <person name="Kamata A."/>
            <person name="Sekido S."/>
            <person name="Kobayashi Y."/>
            <person name="Hashimoto A."/>
            <person name="Hamamoto M."/>
            <person name="Hiraoka Y."/>
            <person name="Horinouchi S."/>
            <person name="Yoshida M."/>
        </authorList>
    </citation>
    <scope>SUBCELLULAR LOCATION [LARGE SCALE ANALYSIS]</scope>
</reference>
<reference key="4">
    <citation type="journal article" date="2010" name="J. Biol. Chem.">
        <title>Methylation of ribosomal protein L42 regulates ribosomal function and stress-adapted cell growth.</title>
        <authorList>
            <person name="Shirai A."/>
            <person name="Sadaie M."/>
            <person name="Shinmyozu K."/>
            <person name="Nakayama J."/>
        </authorList>
    </citation>
    <scope>FUNCTION</scope>
    <scope>SUBCELLULAR LOCATION</scope>
</reference>